<organism>
    <name type="scientific">Streptococcus pneumoniae (strain ATCC BAA-255 / R6)</name>
    <dbReference type="NCBI Taxonomy" id="171101"/>
    <lineage>
        <taxon>Bacteria</taxon>
        <taxon>Bacillati</taxon>
        <taxon>Bacillota</taxon>
        <taxon>Bacilli</taxon>
        <taxon>Lactobacillales</taxon>
        <taxon>Streptococcaceae</taxon>
        <taxon>Streptococcus</taxon>
    </lineage>
</organism>
<name>PYRK_STRR6</name>
<proteinExistence type="inferred from homology"/>
<sequence>MIRLETMKVVAQEEIAPAIFELVLEGEMVEAMRAGQFLHLRVPDDAHLLRRPISISSIDKANKQCHLIYRIEGAGTAIFSTLSQGDTLDVMGPQGNGFDLSDLDEQNQVLLVGGGIGVPPLLEVAKELHERGVKVVTVLGFANKDAVILKTELAQYGQVFVTTDDGSYGIKGNVSVVINDLDSQFDAVYSCGAPGMMKYINQTFDDHPRAYLSLESRMACGMGACYACVLKVPESETVSQRVCEDGPVFRTGTVVL</sequence>
<keyword id="KW-0001">2Fe-2S</keyword>
<keyword id="KW-0249">Electron transport</keyword>
<keyword id="KW-0274">FAD</keyword>
<keyword id="KW-0285">Flavoprotein</keyword>
<keyword id="KW-0408">Iron</keyword>
<keyword id="KW-0411">Iron-sulfur</keyword>
<keyword id="KW-0479">Metal-binding</keyword>
<keyword id="KW-0665">Pyrimidine biosynthesis</keyword>
<keyword id="KW-1185">Reference proteome</keyword>
<keyword id="KW-0813">Transport</keyword>
<dbReference type="EMBL" id="AE007317">
    <property type="protein sequence ID" value="AAK99669.1"/>
    <property type="status" value="ALT_INIT"/>
    <property type="molecule type" value="Genomic_DNA"/>
</dbReference>
<dbReference type="PIR" id="A97980">
    <property type="entry name" value="A97980"/>
</dbReference>
<dbReference type="RefSeq" id="NP_358459.1">
    <property type="nucleotide sequence ID" value="NC_003098.1"/>
</dbReference>
<dbReference type="SMR" id="Q8DQ38"/>
<dbReference type="STRING" id="171101.spr0865"/>
<dbReference type="KEGG" id="spr:spr0865"/>
<dbReference type="PATRIC" id="fig|171101.6.peg.953"/>
<dbReference type="eggNOG" id="COG0543">
    <property type="taxonomic scope" value="Bacteria"/>
</dbReference>
<dbReference type="HOGENOM" id="CLU_003827_1_2_9"/>
<dbReference type="UniPathway" id="UPA00070">
    <property type="reaction ID" value="UER00945"/>
</dbReference>
<dbReference type="Proteomes" id="UP000000586">
    <property type="component" value="Chromosome"/>
</dbReference>
<dbReference type="GO" id="GO:0051537">
    <property type="term" value="F:2 iron, 2 sulfur cluster binding"/>
    <property type="evidence" value="ECO:0007669"/>
    <property type="project" value="UniProtKB-KW"/>
</dbReference>
<dbReference type="GO" id="GO:0009055">
    <property type="term" value="F:electron transfer activity"/>
    <property type="evidence" value="ECO:0007669"/>
    <property type="project" value="UniProtKB-UniRule"/>
</dbReference>
<dbReference type="GO" id="GO:0050660">
    <property type="term" value="F:flavin adenine dinucleotide binding"/>
    <property type="evidence" value="ECO:0007669"/>
    <property type="project" value="InterPro"/>
</dbReference>
<dbReference type="GO" id="GO:0046872">
    <property type="term" value="F:metal ion binding"/>
    <property type="evidence" value="ECO:0007669"/>
    <property type="project" value="UniProtKB-KW"/>
</dbReference>
<dbReference type="GO" id="GO:0016491">
    <property type="term" value="F:oxidoreductase activity"/>
    <property type="evidence" value="ECO:0007669"/>
    <property type="project" value="InterPro"/>
</dbReference>
<dbReference type="GO" id="GO:0044205">
    <property type="term" value="P:'de novo' UMP biosynthetic process"/>
    <property type="evidence" value="ECO:0007669"/>
    <property type="project" value="UniProtKB-UniRule"/>
</dbReference>
<dbReference type="CDD" id="cd06218">
    <property type="entry name" value="DHOD_e_trans"/>
    <property type="match status" value="1"/>
</dbReference>
<dbReference type="Gene3D" id="2.10.240.10">
    <property type="entry name" value="Dihydroorotate dehydrogenase, electron transfer subunit"/>
    <property type="match status" value="1"/>
</dbReference>
<dbReference type="Gene3D" id="3.40.50.80">
    <property type="entry name" value="Nucleotide-binding domain of ferredoxin-NADP reductase (FNR) module"/>
    <property type="match status" value="1"/>
</dbReference>
<dbReference type="Gene3D" id="2.40.30.10">
    <property type="entry name" value="Translation factors"/>
    <property type="match status" value="1"/>
</dbReference>
<dbReference type="HAMAP" id="MF_01211">
    <property type="entry name" value="DHODB_Fe_S_bind"/>
    <property type="match status" value="1"/>
</dbReference>
<dbReference type="InterPro" id="IPR008333">
    <property type="entry name" value="Cbr1-like_FAD-bd_dom"/>
</dbReference>
<dbReference type="InterPro" id="IPR012165">
    <property type="entry name" value="Cyt_c3_hydrogenase_gsu"/>
</dbReference>
<dbReference type="InterPro" id="IPR037117">
    <property type="entry name" value="Dihydroorotate_DH_ele_sf"/>
</dbReference>
<dbReference type="InterPro" id="IPR019480">
    <property type="entry name" value="Dihydroorotate_DH_Fe-S-bd"/>
</dbReference>
<dbReference type="InterPro" id="IPR023455">
    <property type="entry name" value="Dihydroorotate_DHASE_ETsu"/>
</dbReference>
<dbReference type="InterPro" id="IPR017927">
    <property type="entry name" value="FAD-bd_FR_type"/>
</dbReference>
<dbReference type="InterPro" id="IPR039261">
    <property type="entry name" value="FNR_nucleotide-bd"/>
</dbReference>
<dbReference type="InterPro" id="IPR001433">
    <property type="entry name" value="OxRdtase_FAD/NAD-bd"/>
</dbReference>
<dbReference type="InterPro" id="IPR050353">
    <property type="entry name" value="PyrK_electron_transfer"/>
</dbReference>
<dbReference type="InterPro" id="IPR017938">
    <property type="entry name" value="Riboflavin_synthase-like_b-brl"/>
</dbReference>
<dbReference type="NCBIfam" id="NF000797">
    <property type="entry name" value="PRK00054.1-2"/>
    <property type="match status" value="1"/>
</dbReference>
<dbReference type="PANTHER" id="PTHR43513">
    <property type="entry name" value="DIHYDROOROTATE DEHYDROGENASE B (NAD(+)), ELECTRON TRANSFER SUBUNIT"/>
    <property type="match status" value="1"/>
</dbReference>
<dbReference type="PANTHER" id="PTHR43513:SF3">
    <property type="entry name" value="DIHYDROOROTATE DEHYDROGENASE B (NAD(+)), ELECTRON TRANSFER SUBUNIT-RELATED"/>
    <property type="match status" value="1"/>
</dbReference>
<dbReference type="Pfam" id="PF10418">
    <property type="entry name" value="DHODB_Fe-S_bind"/>
    <property type="match status" value="1"/>
</dbReference>
<dbReference type="Pfam" id="PF00970">
    <property type="entry name" value="FAD_binding_6"/>
    <property type="match status" value="1"/>
</dbReference>
<dbReference type="Pfam" id="PF00175">
    <property type="entry name" value="NAD_binding_1"/>
    <property type="match status" value="1"/>
</dbReference>
<dbReference type="PIRSF" id="PIRSF006816">
    <property type="entry name" value="Cyc3_hyd_g"/>
    <property type="match status" value="1"/>
</dbReference>
<dbReference type="PRINTS" id="PR00409">
    <property type="entry name" value="PHDIOXRDTASE"/>
</dbReference>
<dbReference type="SUPFAM" id="SSF52343">
    <property type="entry name" value="Ferredoxin reductase-like, C-terminal NADP-linked domain"/>
    <property type="match status" value="1"/>
</dbReference>
<dbReference type="SUPFAM" id="SSF63380">
    <property type="entry name" value="Riboflavin synthase domain-like"/>
    <property type="match status" value="1"/>
</dbReference>
<dbReference type="PROSITE" id="PS51384">
    <property type="entry name" value="FAD_FR"/>
    <property type="match status" value="1"/>
</dbReference>
<feature type="chain" id="PRO_0000148369" description="Dihydroorotate dehydrogenase B (NAD(+)), electron transfer subunit">
    <location>
        <begin position="1"/>
        <end position="256"/>
    </location>
</feature>
<feature type="domain" description="FAD-binding FR-type" evidence="1">
    <location>
        <begin position="2"/>
        <end position="100"/>
    </location>
</feature>
<feature type="binding site" evidence="1">
    <location>
        <begin position="51"/>
        <end position="54"/>
    </location>
    <ligand>
        <name>FAD</name>
        <dbReference type="ChEBI" id="CHEBI:57692"/>
    </ligand>
</feature>
<feature type="binding site" evidence="1">
    <location>
        <begin position="68"/>
        <end position="70"/>
    </location>
    <ligand>
        <name>FAD</name>
        <dbReference type="ChEBI" id="CHEBI:57692"/>
    </ligand>
</feature>
<feature type="binding site" evidence="1">
    <location>
        <begin position="75"/>
        <end position="76"/>
    </location>
    <ligand>
        <name>FAD</name>
        <dbReference type="ChEBI" id="CHEBI:57692"/>
    </ligand>
</feature>
<feature type="binding site" evidence="1">
    <location>
        <position position="220"/>
    </location>
    <ligand>
        <name>[2Fe-2S] cluster</name>
        <dbReference type="ChEBI" id="CHEBI:190135"/>
    </ligand>
</feature>
<feature type="binding site" evidence="1">
    <location>
        <position position="225"/>
    </location>
    <ligand>
        <name>[2Fe-2S] cluster</name>
        <dbReference type="ChEBI" id="CHEBI:190135"/>
    </ligand>
</feature>
<feature type="binding site" evidence="1">
    <location>
        <position position="228"/>
    </location>
    <ligand>
        <name>[2Fe-2S] cluster</name>
        <dbReference type="ChEBI" id="CHEBI:190135"/>
    </ligand>
</feature>
<feature type="binding site" evidence="1">
    <location>
        <position position="243"/>
    </location>
    <ligand>
        <name>[2Fe-2S] cluster</name>
        <dbReference type="ChEBI" id="CHEBI:190135"/>
    </ligand>
</feature>
<evidence type="ECO:0000255" key="1">
    <source>
        <dbReference type="HAMAP-Rule" id="MF_01211"/>
    </source>
</evidence>
<evidence type="ECO:0000305" key="2"/>
<protein>
    <recommendedName>
        <fullName evidence="1">Dihydroorotate dehydrogenase B (NAD(+)), electron transfer subunit</fullName>
    </recommendedName>
    <alternativeName>
        <fullName evidence="1">Dihydroorotate oxidase B, electron transfer subunit</fullName>
    </alternativeName>
</protein>
<accession>Q8DQ38</accession>
<comment type="function">
    <text evidence="1">Responsible for channeling the electrons from the oxidation of dihydroorotate from the FMN redox center in the PyrD type B subunit to the ultimate electron acceptor NAD(+).</text>
</comment>
<comment type="cofactor">
    <cofactor evidence="1">
        <name>[2Fe-2S] cluster</name>
        <dbReference type="ChEBI" id="CHEBI:190135"/>
    </cofactor>
    <text evidence="1">Binds 1 [2Fe-2S] cluster per subunit.</text>
</comment>
<comment type="cofactor">
    <cofactor evidence="1">
        <name>FAD</name>
        <dbReference type="ChEBI" id="CHEBI:57692"/>
    </cofactor>
    <text evidence="1">Binds 1 FAD per subunit.</text>
</comment>
<comment type="pathway">
    <text evidence="1">Pyrimidine metabolism; UMP biosynthesis via de novo pathway; orotate from (S)-dihydroorotate (NAD(+) route): step 1/1.</text>
</comment>
<comment type="subunit">
    <text evidence="1">Heterotetramer of 2 PyrK and 2 PyrD type B subunits.</text>
</comment>
<comment type="similarity">
    <text evidence="1">Belongs to the PyrK family.</text>
</comment>
<comment type="sequence caution" evidence="2">
    <conflict type="erroneous initiation">
        <sequence resource="EMBL-CDS" id="AAK99669"/>
    </conflict>
</comment>
<reference key="1">
    <citation type="journal article" date="2001" name="J. Bacteriol.">
        <title>Genome of the bacterium Streptococcus pneumoniae strain R6.</title>
        <authorList>
            <person name="Hoskins J."/>
            <person name="Alborn W.E. Jr."/>
            <person name="Arnold J."/>
            <person name="Blaszczak L.C."/>
            <person name="Burgett S."/>
            <person name="DeHoff B.S."/>
            <person name="Estrem S.T."/>
            <person name="Fritz L."/>
            <person name="Fu D.-J."/>
            <person name="Fuller W."/>
            <person name="Geringer C."/>
            <person name="Gilmour R."/>
            <person name="Glass J.S."/>
            <person name="Khoja H."/>
            <person name="Kraft A.R."/>
            <person name="Lagace R.E."/>
            <person name="LeBlanc D.J."/>
            <person name="Lee L.N."/>
            <person name="Lefkowitz E.J."/>
            <person name="Lu J."/>
            <person name="Matsushima P."/>
            <person name="McAhren S.M."/>
            <person name="McHenney M."/>
            <person name="McLeaster K."/>
            <person name="Mundy C.W."/>
            <person name="Nicas T.I."/>
            <person name="Norris F.H."/>
            <person name="O'Gara M."/>
            <person name="Peery R.B."/>
            <person name="Robertson G.T."/>
            <person name="Rockey P."/>
            <person name="Sun P.-M."/>
            <person name="Winkler M.E."/>
            <person name="Yang Y."/>
            <person name="Young-Bellido M."/>
            <person name="Zhao G."/>
            <person name="Zook C.A."/>
            <person name="Baltz R.H."/>
            <person name="Jaskunas S.R."/>
            <person name="Rosteck P.R. Jr."/>
            <person name="Skatrud P.L."/>
            <person name="Glass J.I."/>
        </authorList>
    </citation>
    <scope>NUCLEOTIDE SEQUENCE [LARGE SCALE GENOMIC DNA]</scope>
    <source>
        <strain>ATCC BAA-255 / R6</strain>
    </source>
</reference>
<gene>
    <name evidence="1" type="primary">pyrK</name>
    <name type="synonym">pyrDII</name>
    <name type="ordered locus">spr0865</name>
</gene>